<comment type="function">
    <text evidence="1 7">Transcriptional regulator which can act as an activator or a repressor. Inhibits the enhancer element of the AFP gene by binding to its AT-rich core sequence. In concert with SMAD-dependent TGF-beta signaling can repress the transcription of AFP via its interaction with SMAD2/3 (By similarity). Regulates the circadian locomotor rhythms via transcriptional activation of neuropeptidergic genes which are essential for intercellular synchrony and rhythm amplitude in the suprachiasmatic nucleus (SCN) of the brain (PubMed:26232227). Regulator of myoblasts differentiation through the binding to the AT-rich sequence of MYF6 promoter and promoter repression. Down-regulates the MUC5AC promoter in gastric cancer. In association with RUNX3, up-regulates CDKN1A promoter activity following TGF-beta stimulation (By similarity).</text>
</comment>
<comment type="subunit">
    <text evidence="1 9">Interacts with ALKBH4 and PIAS3 (By similarity). Interacts with FNBP3. Interacts with ESR1, RUNX3, TRIM25, SMAD2 and SMAD3 (By similarity).</text>
</comment>
<comment type="subcellular location">
    <subcellularLocation>
        <location evidence="1">Nucleus</location>
    </subcellularLocation>
    <subcellularLocation>
        <location evidence="1">Cytoplasm</location>
    </subcellularLocation>
    <text evidence="1">Translocates from the cytoplasm to the nucleus following TGF-beta stimulation. Expressed in nuclear body (NB)-like dots in the nucleus some of which overlap or closely associate with PML body.</text>
</comment>
<comment type="tissue specificity">
    <text evidence="5 7 8">Expressed in suprachiasmatic nucleus (SCN) of the brain (at protein level). Expressed in skeletal muscle. Levels of expression are high in myoblasts but low in differentiated muscle. Expressed in the heart, primarily in the atria (PubMed:37449401).</text>
</comment>
<comment type="PTM">
    <text evidence="6">Phosphorylated at Ser-2634 in both embryonic and adult brain. Phosphorylation at Ser-1600, Ser-2795, Ser-2804, Ser-2900, Ser-3434, Ser-3616 and Ser-3700 is restricted to the embryonic brain. Hyperphosphorylation in embryonic brain protects ZFHX3 from calpain/CAPN1-mediated degradation.</text>
</comment>
<comment type="PTM">
    <text evidence="1">Ubiquitinated, leading to its proteasomal degradation.</text>
</comment>
<comment type="PTM">
    <text evidence="1">Nuclear localization is essential for its sumoylation.</text>
</comment>
<gene>
    <name type="primary">Zfhx3</name>
    <name evidence="10" type="synonym">Atbf1</name>
</gene>
<proteinExistence type="evidence at protein level"/>
<name>ZFHX3_MOUSE</name>
<reference key="1">
    <citation type="journal article" date="1996" name="Gene">
        <title>Cloning of the cDNA encoding the mouse ATBF1 transcription factor.</title>
        <authorList>
            <person name="Ido A."/>
            <person name="Miura Y."/>
            <person name="Watanabe M."/>
            <person name="Sakai M."/>
            <person name="Inoue Y."/>
            <person name="Miki T."/>
            <person name="Hashimoto T."/>
            <person name="Morinaga T."/>
            <person name="Nishi S."/>
            <person name="Tamaoki T."/>
        </authorList>
    </citation>
    <scope>NUCLEOTIDE SEQUENCE [MRNA]</scope>
    <source>
        <strain>BALB/MK X ICR</strain>
        <tissue>Brain</tissue>
    </source>
</reference>
<reference key="2">
    <citation type="journal article" date="1997" name="EMBO J.">
        <title>FBP WW domains and the Abl SH3 domain bind to a specific class of proline-rich ligands.</title>
        <authorList>
            <person name="Bedford M.T."/>
            <person name="Chan D.C."/>
            <person name="Leder P."/>
        </authorList>
    </citation>
    <scope>INTERACTION WITH FNBP3</scope>
</reference>
<reference key="3">
    <citation type="journal article" date="2001" name="J. Biol. Chem.">
        <title>Positive and negative regulation of myogenic differentiation of C2C12 cells by isoforms of the multiple homeodomain zinc finger transcription factor ATBF1.</title>
        <authorList>
            <person name="Berry F.B."/>
            <person name="Miura Y."/>
            <person name="Mihara K."/>
            <person name="Kaspar P."/>
            <person name="Sakata N."/>
            <person name="Hashimoto-Tamaoki T."/>
            <person name="Tamaoki T."/>
        </authorList>
    </citation>
    <scope>TISSUE SPECIFICITY</scope>
</reference>
<reference key="4">
    <citation type="journal article" date="2010" name="Cell">
        <title>A tissue-specific atlas of mouse protein phosphorylation and expression.</title>
        <authorList>
            <person name="Huttlin E.L."/>
            <person name="Jedrychowski M.P."/>
            <person name="Elias J.E."/>
            <person name="Goswami T."/>
            <person name="Rad R."/>
            <person name="Beausoleil S.A."/>
            <person name="Villen J."/>
            <person name="Haas W."/>
            <person name="Sowa M.E."/>
            <person name="Gygi S.P."/>
        </authorList>
    </citation>
    <scope>PHOSPHORYLATION [LARGE SCALE ANALYSIS] AT SER-2904</scope>
    <scope>IDENTIFICATION BY MASS SPECTROMETRY [LARGE SCALE ANALYSIS]</scope>
    <source>
        <tissue>Kidney</tissue>
        <tissue>Lung</tissue>
    </source>
</reference>
<reference key="5">
    <citation type="journal article" date="2012" name="Biochem. Biophys. Res. Commun.">
        <title>AT motif binding factor 1 (ATBF1) is highly phosphorylated in embryonic brain and protected from cleavage by calpain-1.</title>
        <authorList>
            <person name="Zhang S."/>
            <person name="Kim T.S."/>
            <person name="Dong Y."/>
            <person name="Kanazawa S."/>
            <person name="Kawaguchi M."/>
            <person name="Gao N."/>
            <person name="Minato H."/>
            <person name="Takegami T."/>
            <person name="Nojima T."/>
            <person name="Asai K."/>
            <person name="Miura Y."/>
        </authorList>
    </citation>
    <scope>PHOSPHORYLATION AT SER-1600; SER-2634; SER-2795; SER-2804; SER-2900; SER-3434; SER-3616 AND SER-3700</scope>
    <scope>IDENTIFICATION BY MASS SPECTROMETRY</scope>
    <scope>PROTEOLYTIC PROCESSING</scope>
</reference>
<reference key="6">
    <citation type="journal article" date="2015" name="Cell">
        <title>The regulatory factor ZFHX3 modifies circadian function in SCN via an AT motif-driven axis.</title>
        <authorList>
            <person name="Parsons M.J."/>
            <person name="Brancaccio M."/>
            <person name="Sethi S."/>
            <person name="Maywood E.S."/>
            <person name="Satija R."/>
            <person name="Edwards J.K."/>
            <person name="Jagannath A."/>
            <person name="Couch Y."/>
            <person name="Finelli M.J."/>
            <person name="Smyllie N.J."/>
            <person name="Esapa C."/>
            <person name="Butler R."/>
            <person name="Barnard A.R."/>
            <person name="Chesham J.E."/>
            <person name="Saito S."/>
            <person name="Joynson G."/>
            <person name="Wells S."/>
            <person name="Foster R.G."/>
            <person name="Oliver P.L."/>
            <person name="Simon M.M."/>
            <person name="Mallon A.M."/>
            <person name="Hastings M.H."/>
            <person name="Nolan P.M."/>
        </authorList>
    </citation>
    <scope>FUNCTION</scope>
    <scope>IDENTIFICATION BY MASS SPECTROMETRY</scope>
    <scope>TISSUE SPECIFICITY</scope>
    <scope>MUTAGENESIS OF VAL-1963</scope>
</reference>
<reference key="7">
    <citation type="journal article" date="2023" name="Circ. Res.">
        <title>Loss of the atrial fibrillation-related gene, Zfhx3, results in atrial dilation and arrhythmias.</title>
        <authorList>
            <person name="Jameson H.S."/>
            <person name="Hanley A."/>
            <person name="Hill M.C."/>
            <person name="Xiao L."/>
            <person name="Ye J."/>
            <person name="Bapat A."/>
            <person name="Ronzier E."/>
            <person name="Hall A.W."/>
            <person name="Hucker W.J."/>
            <person name="Clauss S."/>
            <person name="Barazza M."/>
            <person name="Silber E."/>
            <person name="Mina J.A."/>
            <person name="Tucker N.R."/>
            <person name="Mills R.W."/>
            <person name="Dong J.T."/>
            <person name="Milan D.J."/>
            <person name="Ellinor P.T."/>
        </authorList>
    </citation>
    <scope>TISSUE SPECIFICITY</scope>
</reference>
<accession>Q61329</accession>
<feature type="chain" id="PRO_0000046931" description="Zinc finger homeobox protein 3">
    <location>
        <begin position="1"/>
        <end position="3726"/>
    </location>
</feature>
<feature type="zinc finger region" description="C2H2-type 1" evidence="2">
    <location>
        <begin position="79"/>
        <end position="103"/>
    </location>
</feature>
<feature type="zinc finger region" description="C2H2-type 2" evidence="2">
    <location>
        <begin position="282"/>
        <end position="305"/>
    </location>
</feature>
<feature type="zinc finger region" description="C2H2-type 3" evidence="2">
    <location>
        <begin position="641"/>
        <end position="664"/>
    </location>
</feature>
<feature type="zinc finger region" description="C2H2-type 4" evidence="2">
    <location>
        <begin position="672"/>
        <end position="695"/>
    </location>
</feature>
<feature type="zinc finger region" description="C2H2-type 5" evidence="2">
    <location>
        <begin position="727"/>
        <end position="751"/>
    </location>
</feature>
<feature type="zinc finger region" description="C2H2-type 6; atypical" evidence="2">
    <location>
        <begin position="805"/>
        <end position="829"/>
    </location>
</feature>
<feature type="zinc finger region" description="C2H2-type 7; degenerate" evidence="2">
    <location>
        <begin position="946"/>
        <end position="969"/>
    </location>
</feature>
<feature type="zinc finger region" description="C2H2-type 8; atypical" evidence="2">
    <location>
        <begin position="985"/>
        <end position="1009"/>
    </location>
</feature>
<feature type="zinc finger region" description="C2H2-type 9; atypical" evidence="2">
    <location>
        <begin position="1041"/>
        <end position="1065"/>
    </location>
</feature>
<feature type="zinc finger region" description="C2H2-type 10; atypical" evidence="2">
    <location>
        <begin position="1089"/>
        <end position="1113"/>
    </location>
</feature>
<feature type="zinc finger region" description="C2H2-type 11; atypical" evidence="2">
    <location>
        <begin position="1233"/>
        <end position="1256"/>
    </location>
</feature>
<feature type="zinc finger region" description="C2H2-type 12" evidence="2">
    <location>
        <begin position="1262"/>
        <end position="1285"/>
    </location>
</feature>
<feature type="zinc finger region" description="C2H2-type 13" evidence="2">
    <location>
        <begin position="1370"/>
        <end position="1395"/>
    </location>
</feature>
<feature type="zinc finger region" description="C2H2-type 14" evidence="2">
    <location>
        <begin position="1411"/>
        <end position="1433"/>
    </location>
</feature>
<feature type="zinc finger region" description="C2H2-type 15" evidence="2">
    <location>
        <begin position="1439"/>
        <end position="1462"/>
    </location>
</feature>
<feature type="zinc finger region" description="C2H2-type 16" evidence="2">
    <location>
        <begin position="1555"/>
        <end position="1579"/>
    </location>
</feature>
<feature type="zinc finger region" description="C2H2-type 17" evidence="2">
    <location>
        <begin position="1606"/>
        <end position="1630"/>
    </location>
</feature>
<feature type="zinc finger region" description="C2H2-type 18" evidence="2">
    <location>
        <begin position="1990"/>
        <end position="2013"/>
    </location>
</feature>
<feature type="DNA-binding region" description="Homeobox 1" evidence="3">
    <location>
        <begin position="2152"/>
        <end position="2211"/>
    </location>
</feature>
<feature type="DNA-binding region" description="Homeobox 2" evidence="3">
    <location>
        <begin position="2249"/>
        <end position="2308"/>
    </location>
</feature>
<feature type="zinc finger region" description="C2H2-type 19; atypical" evidence="2">
    <location>
        <begin position="2335"/>
        <end position="2358"/>
    </location>
</feature>
<feature type="zinc finger region" description="C2H2-type 20" evidence="2">
    <location>
        <begin position="2539"/>
        <end position="2561"/>
    </location>
</feature>
<feature type="DNA-binding region" description="Homeobox 3" evidence="3">
    <location>
        <begin position="2650"/>
        <end position="2709"/>
    </location>
</feature>
<feature type="zinc finger region" description="C2H2-type 21" evidence="2">
    <location>
        <begin position="2720"/>
        <end position="2743"/>
    </location>
</feature>
<feature type="DNA-binding region" description="Homeobox 4" evidence="3">
    <location>
        <begin position="2952"/>
        <end position="3011"/>
    </location>
</feature>
<feature type="zinc finger region" description="C2H2-type 22" evidence="2">
    <location>
        <begin position="3032"/>
        <end position="3056"/>
    </location>
</feature>
<feature type="zinc finger region" description="C2H2-type 23" evidence="2">
    <location>
        <begin position="3552"/>
        <end position="3576"/>
    </location>
</feature>
<feature type="region of interest" description="Disordered" evidence="4">
    <location>
        <begin position="1"/>
        <end position="79"/>
    </location>
</feature>
<feature type="region of interest" description="Disordered" evidence="4">
    <location>
        <begin position="95"/>
        <end position="129"/>
    </location>
</feature>
<feature type="region of interest" description="Disordered" evidence="4">
    <location>
        <begin position="417"/>
        <end position="557"/>
    </location>
</feature>
<feature type="region of interest" description="Disordered" evidence="4">
    <location>
        <begin position="590"/>
        <end position="621"/>
    </location>
</feature>
<feature type="region of interest" description="Disordered" evidence="4">
    <location>
        <begin position="1125"/>
        <end position="1228"/>
    </location>
</feature>
<feature type="region of interest" description="Disordered" evidence="4">
    <location>
        <begin position="1320"/>
        <end position="1361"/>
    </location>
</feature>
<feature type="region of interest" description="Disordered" evidence="4">
    <location>
        <begin position="1500"/>
        <end position="1539"/>
    </location>
</feature>
<feature type="region of interest" description="Disordered" evidence="4">
    <location>
        <begin position="1639"/>
        <end position="1678"/>
    </location>
</feature>
<feature type="region of interest" description="Disordered" evidence="4">
    <location>
        <begin position="1706"/>
        <end position="1738"/>
    </location>
</feature>
<feature type="region of interest" description="Disordered" evidence="4">
    <location>
        <begin position="1866"/>
        <end position="1943"/>
    </location>
</feature>
<feature type="region of interest" description="Disordered" evidence="4">
    <location>
        <begin position="2037"/>
        <end position="2089"/>
    </location>
</feature>
<feature type="region of interest" description="Disordered" evidence="4">
    <location>
        <begin position="2211"/>
        <end position="2249"/>
    </location>
</feature>
<feature type="region of interest" description="Disordered" evidence="4">
    <location>
        <begin position="2383"/>
        <end position="2405"/>
    </location>
</feature>
<feature type="region of interest" description="Disordered" evidence="4">
    <location>
        <begin position="2429"/>
        <end position="2529"/>
    </location>
</feature>
<feature type="region of interest" description="Disordered" evidence="4">
    <location>
        <begin position="2628"/>
        <end position="2656"/>
    </location>
</feature>
<feature type="region of interest" description="Disordered" evidence="4">
    <location>
        <begin position="2780"/>
        <end position="2805"/>
    </location>
</feature>
<feature type="region of interest" description="Disordered" evidence="4">
    <location>
        <begin position="2850"/>
        <end position="2877"/>
    </location>
</feature>
<feature type="region of interest" description="Disordered" evidence="4">
    <location>
        <begin position="2920"/>
        <end position="2955"/>
    </location>
</feature>
<feature type="region of interest" description="Disordered" evidence="4">
    <location>
        <begin position="3145"/>
        <end position="3274"/>
    </location>
</feature>
<feature type="region of interest" description="Disordered" evidence="4">
    <location>
        <begin position="3415"/>
        <end position="3476"/>
    </location>
</feature>
<feature type="region of interest" description="Disordered" evidence="4">
    <location>
        <begin position="3588"/>
        <end position="3726"/>
    </location>
</feature>
<feature type="short sequence motif" description="Nuclear localization signal" evidence="1">
    <location>
        <begin position="2624"/>
        <end position="2626"/>
    </location>
</feature>
<feature type="compositionally biased region" description="Acidic residues" evidence="4">
    <location>
        <begin position="116"/>
        <end position="126"/>
    </location>
</feature>
<feature type="compositionally biased region" description="Basic and acidic residues" evidence="4">
    <location>
        <begin position="431"/>
        <end position="459"/>
    </location>
</feature>
<feature type="compositionally biased region" description="Acidic residues" evidence="4">
    <location>
        <begin position="460"/>
        <end position="491"/>
    </location>
</feature>
<feature type="compositionally biased region" description="Acidic residues" evidence="4">
    <location>
        <begin position="500"/>
        <end position="510"/>
    </location>
</feature>
<feature type="compositionally biased region" description="Polar residues" evidence="4">
    <location>
        <begin position="528"/>
        <end position="557"/>
    </location>
</feature>
<feature type="compositionally biased region" description="Acidic residues" evidence="4">
    <location>
        <begin position="1149"/>
        <end position="1159"/>
    </location>
</feature>
<feature type="compositionally biased region" description="Polar residues" evidence="4">
    <location>
        <begin position="1175"/>
        <end position="1191"/>
    </location>
</feature>
<feature type="compositionally biased region" description="Polar residues" evidence="4">
    <location>
        <begin position="1199"/>
        <end position="1217"/>
    </location>
</feature>
<feature type="compositionally biased region" description="Polar residues" evidence="4">
    <location>
        <begin position="1514"/>
        <end position="1526"/>
    </location>
</feature>
<feature type="compositionally biased region" description="Low complexity" evidence="4">
    <location>
        <begin position="1643"/>
        <end position="1669"/>
    </location>
</feature>
<feature type="compositionally biased region" description="Basic and acidic residues" evidence="4">
    <location>
        <begin position="1717"/>
        <end position="1727"/>
    </location>
</feature>
<feature type="compositionally biased region" description="Low complexity" evidence="4">
    <location>
        <begin position="1866"/>
        <end position="1878"/>
    </location>
</feature>
<feature type="compositionally biased region" description="Basic and acidic residues" evidence="4">
    <location>
        <begin position="1879"/>
        <end position="1902"/>
    </location>
</feature>
<feature type="compositionally biased region" description="Pro residues" evidence="4">
    <location>
        <begin position="2041"/>
        <end position="2066"/>
    </location>
</feature>
<feature type="compositionally biased region" description="Polar residues" evidence="4">
    <location>
        <begin position="2214"/>
        <end position="2223"/>
    </location>
</feature>
<feature type="compositionally biased region" description="Low complexity" evidence="4">
    <location>
        <begin position="2458"/>
        <end position="2478"/>
    </location>
</feature>
<feature type="compositionally biased region" description="Pro residues" evidence="4">
    <location>
        <begin position="2479"/>
        <end position="2507"/>
    </location>
</feature>
<feature type="compositionally biased region" description="Low complexity" evidence="4">
    <location>
        <begin position="2508"/>
        <end position="2521"/>
    </location>
</feature>
<feature type="compositionally biased region" description="Polar residues" evidence="4">
    <location>
        <begin position="2780"/>
        <end position="2789"/>
    </location>
</feature>
<feature type="compositionally biased region" description="Low complexity" evidence="4">
    <location>
        <begin position="2929"/>
        <end position="2944"/>
    </location>
</feature>
<feature type="compositionally biased region" description="Polar residues" evidence="4">
    <location>
        <begin position="3147"/>
        <end position="3156"/>
    </location>
</feature>
<feature type="compositionally biased region" description="Low complexity" evidence="4">
    <location>
        <begin position="3181"/>
        <end position="3199"/>
    </location>
</feature>
<feature type="compositionally biased region" description="Pro residues" evidence="4">
    <location>
        <begin position="3200"/>
        <end position="3221"/>
    </location>
</feature>
<feature type="compositionally biased region" description="Low complexity" evidence="4">
    <location>
        <begin position="3222"/>
        <end position="3234"/>
    </location>
</feature>
<feature type="compositionally biased region" description="Basic and acidic residues" evidence="4">
    <location>
        <begin position="3235"/>
        <end position="3267"/>
    </location>
</feature>
<feature type="compositionally biased region" description="Basic and acidic residues" evidence="4">
    <location>
        <begin position="3435"/>
        <end position="3453"/>
    </location>
</feature>
<feature type="compositionally biased region" description="Low complexity" evidence="4">
    <location>
        <begin position="3605"/>
        <end position="3618"/>
    </location>
</feature>
<feature type="compositionally biased region" description="Low complexity" evidence="4">
    <location>
        <begin position="3645"/>
        <end position="3677"/>
    </location>
</feature>
<feature type="compositionally biased region" description="Polar residues" evidence="4">
    <location>
        <begin position="3715"/>
        <end position="3726"/>
    </location>
</feature>
<feature type="modified residue" description="Phosphoserine" evidence="1">
    <location>
        <position position="426"/>
    </location>
</feature>
<feature type="modified residue" description="Phosphothreonine" evidence="1">
    <location>
        <position position="428"/>
    </location>
</feature>
<feature type="modified residue" description="Phosphoserine" evidence="1">
    <location>
        <position position="535"/>
    </location>
</feature>
<feature type="modified residue" description="Phosphoserine" evidence="1">
    <location>
        <position position="573"/>
    </location>
</feature>
<feature type="modified residue" description="Phosphoserine" evidence="1">
    <location>
        <position position="1207"/>
    </location>
</feature>
<feature type="modified residue" description="Phosphoserine" evidence="6">
    <location>
        <position position="1600"/>
    </location>
</feature>
<feature type="modified residue" description="Phosphoserine" evidence="6">
    <location>
        <position position="2634"/>
    </location>
</feature>
<feature type="modified residue" description="Phosphoserine" evidence="6">
    <location>
        <position position="2795"/>
    </location>
</feature>
<feature type="modified residue" description="Phosphoserine" evidence="6">
    <location>
        <position position="2804"/>
    </location>
</feature>
<feature type="modified residue" description="Phosphoserine" evidence="6">
    <location>
        <position position="2900"/>
    </location>
</feature>
<feature type="modified residue" description="Phosphoserine" evidence="11">
    <location>
        <position position="2904"/>
    </location>
</feature>
<feature type="modified residue" description="Phosphoserine" evidence="6">
    <location>
        <position position="3434"/>
    </location>
</feature>
<feature type="modified residue" description="Phosphoserine" evidence="1">
    <location>
        <position position="3457"/>
    </location>
</feature>
<feature type="modified residue" description="Phosphoserine" evidence="6">
    <location>
        <position position="3616"/>
    </location>
</feature>
<feature type="modified residue" description="Phosphoserine" evidence="6">
    <location>
        <position position="3700"/>
    </location>
</feature>
<feature type="cross-link" description="Glycyl lysine isopeptide (Lys-Gly) (interchain with G-Cter in SUMO1)" evidence="1">
    <location>
        <position position="2356"/>
    </location>
</feature>
<feature type="cross-link" description="Glycyl lysine isopeptide (Lys-Gly) (interchain with G-Cter in SUMO1); alternate" evidence="1">
    <location>
        <position position="2815"/>
    </location>
</feature>
<feature type="cross-link" description="Glycyl lysine isopeptide (Lys-Gly) (interchain with G-Cter in SUMO2); alternate" evidence="1">
    <location>
        <position position="2815"/>
    </location>
</feature>
<feature type="cross-link" description="Glycyl lysine isopeptide (Lys-Gly) (interchain with G-Cter in SUMO1)" evidence="1">
    <location>
        <position position="3262"/>
    </location>
</feature>
<feature type="mutagenesis site" description="In short circuit/sci mutant; shorter circadian period, homozygous lethality during embryonic development and diminished ability to activate the transcription of circadian-related neuropeptides." evidence="7">
    <original>V</original>
    <variation>F</variation>
    <location>
        <position position="1963"/>
    </location>
</feature>
<protein>
    <recommendedName>
        <fullName>Zinc finger homeobox protein 3</fullName>
    </recommendedName>
    <alternativeName>
        <fullName>AT motif-binding factor 1</fullName>
    </alternativeName>
    <alternativeName>
        <fullName>AT-binding transcription factor 1</fullName>
    </alternativeName>
    <alternativeName>
        <fullName>Alpha-fetoprotein enhancer-binding protein</fullName>
    </alternativeName>
    <alternativeName>
        <fullName>Zinc finger homeodomain protein 3</fullName>
        <shortName>ZFH-3</shortName>
    </alternativeName>
</protein>
<keyword id="KW-0010">Activator</keyword>
<keyword id="KW-0963">Cytoplasm</keyword>
<keyword id="KW-0238">DNA-binding</keyword>
<keyword id="KW-0371">Homeobox</keyword>
<keyword id="KW-1017">Isopeptide bond</keyword>
<keyword id="KW-0479">Metal-binding</keyword>
<keyword id="KW-0517">Myogenesis</keyword>
<keyword id="KW-0539">Nucleus</keyword>
<keyword id="KW-0597">Phosphoprotein</keyword>
<keyword id="KW-1185">Reference proteome</keyword>
<keyword id="KW-0677">Repeat</keyword>
<keyword id="KW-0678">Repressor</keyword>
<keyword id="KW-0804">Transcription</keyword>
<keyword id="KW-0805">Transcription regulation</keyword>
<keyword id="KW-0832">Ubl conjugation</keyword>
<keyword id="KW-0862">Zinc</keyword>
<keyword id="KW-0863">Zinc-finger</keyword>
<evidence type="ECO:0000250" key="1">
    <source>
        <dbReference type="UniProtKB" id="Q15911"/>
    </source>
</evidence>
<evidence type="ECO:0000255" key="2">
    <source>
        <dbReference type="PROSITE-ProRule" id="PRU00042"/>
    </source>
</evidence>
<evidence type="ECO:0000255" key="3">
    <source>
        <dbReference type="PROSITE-ProRule" id="PRU00108"/>
    </source>
</evidence>
<evidence type="ECO:0000256" key="4">
    <source>
        <dbReference type="SAM" id="MobiDB-lite"/>
    </source>
</evidence>
<evidence type="ECO:0000269" key="5">
    <source>
    </source>
</evidence>
<evidence type="ECO:0000269" key="6">
    <source>
    </source>
</evidence>
<evidence type="ECO:0000269" key="7">
    <source>
    </source>
</evidence>
<evidence type="ECO:0000269" key="8">
    <source>
    </source>
</evidence>
<evidence type="ECO:0000269" key="9">
    <source>
    </source>
</evidence>
<evidence type="ECO:0000303" key="10">
    <source>
    </source>
</evidence>
<evidence type="ECO:0007744" key="11">
    <source>
    </source>
</evidence>
<dbReference type="EMBL" id="D26046">
    <property type="protein sequence ID" value="BAA05046.1"/>
    <property type="molecule type" value="mRNA"/>
</dbReference>
<dbReference type="SMR" id="Q61329"/>
<dbReference type="FunCoup" id="Q61329">
    <property type="interactions" value="1483"/>
</dbReference>
<dbReference type="IntAct" id="Q61329">
    <property type="interactions" value="4"/>
</dbReference>
<dbReference type="MINT" id="Q61329"/>
<dbReference type="STRING" id="10090.ENSMUSP00000152353"/>
<dbReference type="GlyGen" id="Q61329">
    <property type="glycosylation" value="3 sites, 1 O-linked glycan (2 sites)"/>
</dbReference>
<dbReference type="iPTMnet" id="Q61329"/>
<dbReference type="PhosphoSitePlus" id="Q61329"/>
<dbReference type="SwissPalm" id="Q61329"/>
<dbReference type="PaxDb" id="10090-ENSMUSP00000044612"/>
<dbReference type="PeptideAtlas" id="Q61329"/>
<dbReference type="ProteomicsDB" id="275348"/>
<dbReference type="Pumba" id="Q61329"/>
<dbReference type="AGR" id="MGI:99948"/>
<dbReference type="MGI" id="MGI:99948">
    <property type="gene designation" value="Zfhx3"/>
</dbReference>
<dbReference type="eggNOG" id="KOG1146">
    <property type="taxonomic scope" value="Eukaryota"/>
</dbReference>
<dbReference type="InParanoid" id="Q61329"/>
<dbReference type="PhylomeDB" id="Q61329"/>
<dbReference type="Reactome" id="R-MMU-8941855">
    <property type="pathway name" value="RUNX3 regulates CDKN1A transcription"/>
</dbReference>
<dbReference type="ChiTaRS" id="Zfhx3">
    <property type="organism name" value="mouse"/>
</dbReference>
<dbReference type="PRO" id="PR:Q61329"/>
<dbReference type="Proteomes" id="UP000000589">
    <property type="component" value="Unplaced"/>
</dbReference>
<dbReference type="RNAct" id="Q61329">
    <property type="molecule type" value="protein"/>
</dbReference>
<dbReference type="GO" id="GO:0005739">
    <property type="term" value="C:mitochondrion"/>
    <property type="evidence" value="ECO:0007005"/>
    <property type="project" value="MGI"/>
</dbReference>
<dbReference type="GO" id="GO:0016604">
    <property type="term" value="C:nuclear body"/>
    <property type="evidence" value="ECO:0000250"/>
    <property type="project" value="UniProtKB"/>
</dbReference>
<dbReference type="GO" id="GO:0005634">
    <property type="term" value="C:nucleus"/>
    <property type="evidence" value="ECO:0000250"/>
    <property type="project" value="UniProtKB"/>
</dbReference>
<dbReference type="GO" id="GO:0005667">
    <property type="term" value="C:transcription regulator complex"/>
    <property type="evidence" value="ECO:0000266"/>
    <property type="project" value="MGI"/>
</dbReference>
<dbReference type="GO" id="GO:0000981">
    <property type="term" value="F:DNA-binding transcription factor activity, RNA polymerase II-specific"/>
    <property type="evidence" value="ECO:0007669"/>
    <property type="project" value="InterPro"/>
</dbReference>
<dbReference type="GO" id="GO:0000978">
    <property type="term" value="F:RNA polymerase II cis-regulatory region sequence-specific DNA binding"/>
    <property type="evidence" value="ECO:0000314"/>
    <property type="project" value="UniProtKB"/>
</dbReference>
<dbReference type="GO" id="GO:0008270">
    <property type="term" value="F:zinc ion binding"/>
    <property type="evidence" value="ECO:0007669"/>
    <property type="project" value="UniProtKB-KW"/>
</dbReference>
<dbReference type="GO" id="GO:0032922">
    <property type="term" value="P:circadian regulation of gene expression"/>
    <property type="evidence" value="ECO:0000315"/>
    <property type="project" value="UniProtKB"/>
</dbReference>
<dbReference type="GO" id="GO:0007517">
    <property type="term" value="P:muscle organ development"/>
    <property type="evidence" value="ECO:0007669"/>
    <property type="project" value="UniProtKB-KW"/>
</dbReference>
<dbReference type="GO" id="GO:0000122">
    <property type="term" value="P:negative regulation of transcription by RNA polymerase II"/>
    <property type="evidence" value="ECO:0000266"/>
    <property type="project" value="MGI"/>
</dbReference>
<dbReference type="GO" id="GO:0045785">
    <property type="term" value="P:positive regulation of cell adhesion"/>
    <property type="evidence" value="ECO:0000315"/>
    <property type="project" value="ARUK-UCL"/>
</dbReference>
<dbReference type="GO" id="GO:0045893">
    <property type="term" value="P:positive regulation of DNA-templated transcription"/>
    <property type="evidence" value="ECO:0000315"/>
    <property type="project" value="UniProtKB"/>
</dbReference>
<dbReference type="GO" id="GO:0045944">
    <property type="term" value="P:positive regulation of transcription by RNA polymerase II"/>
    <property type="evidence" value="ECO:0000315"/>
    <property type="project" value="ARUK-UCL"/>
</dbReference>
<dbReference type="GO" id="GO:1904059">
    <property type="term" value="P:regulation of locomotor rhythm"/>
    <property type="evidence" value="ECO:0000315"/>
    <property type="project" value="UniProtKB"/>
</dbReference>
<dbReference type="GO" id="GO:0071559">
    <property type="term" value="P:response to transforming growth factor beta"/>
    <property type="evidence" value="ECO:0000250"/>
    <property type="project" value="UniProtKB"/>
</dbReference>
<dbReference type="CDD" id="cd00086">
    <property type="entry name" value="homeodomain"/>
    <property type="match status" value="4"/>
</dbReference>
<dbReference type="FunFam" id="1.10.10.60:FF:000082">
    <property type="entry name" value="Putative zinc finger homeobox protein 4"/>
    <property type="match status" value="1"/>
</dbReference>
<dbReference type="FunFam" id="3.30.160.60:FF:000429">
    <property type="entry name" value="Zinc finger homeobox protein 3"/>
    <property type="match status" value="1"/>
</dbReference>
<dbReference type="FunFam" id="3.30.160.60:FF:000317">
    <property type="entry name" value="zinc finger homeobox protein 3"/>
    <property type="match status" value="1"/>
</dbReference>
<dbReference type="FunFam" id="3.30.160.60:FF:000378">
    <property type="entry name" value="zinc finger homeobox protein 3"/>
    <property type="match status" value="1"/>
</dbReference>
<dbReference type="FunFam" id="1.10.10.60:FF:000064">
    <property type="entry name" value="Zinc finger homeobox protein 4"/>
    <property type="match status" value="1"/>
</dbReference>
<dbReference type="FunFam" id="1.10.10.60:FF:000096">
    <property type="entry name" value="Zinc finger homeobox protein 4"/>
    <property type="match status" value="1"/>
</dbReference>
<dbReference type="FunFam" id="3.30.160.60:FF:000081">
    <property type="entry name" value="Zinc finger homeobox protein 4"/>
    <property type="match status" value="1"/>
</dbReference>
<dbReference type="FunFam" id="1.10.10.60:FF:000058">
    <property type="entry name" value="zinc finger homeobox protein 4"/>
    <property type="match status" value="1"/>
</dbReference>
<dbReference type="FunFam" id="3.30.160.60:FF:000446">
    <property type="entry name" value="Zinc finger protein"/>
    <property type="match status" value="1"/>
</dbReference>
<dbReference type="Gene3D" id="3.30.160.60">
    <property type="entry name" value="Classic Zinc Finger"/>
    <property type="match status" value="5"/>
</dbReference>
<dbReference type="Gene3D" id="1.10.10.60">
    <property type="entry name" value="Homeodomain-like"/>
    <property type="match status" value="4"/>
</dbReference>
<dbReference type="InterPro" id="IPR001356">
    <property type="entry name" value="HD"/>
</dbReference>
<dbReference type="InterPro" id="IPR017970">
    <property type="entry name" value="Homeobox_CS"/>
</dbReference>
<dbReference type="InterPro" id="IPR009057">
    <property type="entry name" value="Homeodomain-like_sf"/>
</dbReference>
<dbReference type="InterPro" id="IPR003604">
    <property type="entry name" value="Matrin/U1-like-C_Znf_C2H2"/>
</dbReference>
<dbReference type="InterPro" id="IPR036236">
    <property type="entry name" value="Znf_C2H2_sf"/>
</dbReference>
<dbReference type="InterPro" id="IPR013087">
    <property type="entry name" value="Znf_C2H2_type"/>
</dbReference>
<dbReference type="InterPro" id="IPR051968">
    <property type="entry name" value="ZnFinger_Homeobox_TR"/>
</dbReference>
<dbReference type="PANTHER" id="PTHR45891">
    <property type="entry name" value="ZINC FINGER HOMEOBOX PROTEIN"/>
    <property type="match status" value="1"/>
</dbReference>
<dbReference type="PANTHER" id="PTHR45891:SF4">
    <property type="entry name" value="ZINC FINGER HOMEOBOX PROTEIN 3"/>
    <property type="match status" value="1"/>
</dbReference>
<dbReference type="Pfam" id="PF00046">
    <property type="entry name" value="Homeodomain"/>
    <property type="match status" value="4"/>
</dbReference>
<dbReference type="Pfam" id="PF00096">
    <property type="entry name" value="zf-C2H2"/>
    <property type="match status" value="2"/>
</dbReference>
<dbReference type="Pfam" id="PF24056">
    <property type="entry name" value="zf-C2H2_ZFHX3"/>
    <property type="match status" value="1"/>
</dbReference>
<dbReference type="SMART" id="SM00389">
    <property type="entry name" value="HOX"/>
    <property type="match status" value="4"/>
</dbReference>
<dbReference type="SMART" id="SM00355">
    <property type="entry name" value="ZnF_C2H2"/>
    <property type="match status" value="23"/>
</dbReference>
<dbReference type="SMART" id="SM00451">
    <property type="entry name" value="ZnF_U1"/>
    <property type="match status" value="7"/>
</dbReference>
<dbReference type="SUPFAM" id="SSF57667">
    <property type="entry name" value="beta-beta-alpha zinc fingers"/>
    <property type="match status" value="6"/>
</dbReference>
<dbReference type="SUPFAM" id="SSF46689">
    <property type="entry name" value="Homeodomain-like"/>
    <property type="match status" value="4"/>
</dbReference>
<dbReference type="PROSITE" id="PS00027">
    <property type="entry name" value="HOMEOBOX_1"/>
    <property type="match status" value="2"/>
</dbReference>
<dbReference type="PROSITE" id="PS50071">
    <property type="entry name" value="HOMEOBOX_2"/>
    <property type="match status" value="4"/>
</dbReference>
<dbReference type="PROSITE" id="PS00028">
    <property type="entry name" value="ZINC_FINGER_C2H2_1"/>
    <property type="match status" value="15"/>
</dbReference>
<dbReference type="PROSITE" id="PS50157">
    <property type="entry name" value="ZINC_FINGER_C2H2_2"/>
    <property type="match status" value="9"/>
</dbReference>
<organism>
    <name type="scientific">Mus musculus</name>
    <name type="common">Mouse</name>
    <dbReference type="NCBI Taxonomy" id="10090"/>
    <lineage>
        <taxon>Eukaryota</taxon>
        <taxon>Metazoa</taxon>
        <taxon>Chordata</taxon>
        <taxon>Craniata</taxon>
        <taxon>Vertebrata</taxon>
        <taxon>Euteleostomi</taxon>
        <taxon>Mammalia</taxon>
        <taxon>Eutheria</taxon>
        <taxon>Euarchontoglires</taxon>
        <taxon>Glires</taxon>
        <taxon>Rodentia</taxon>
        <taxon>Myomorpha</taxon>
        <taxon>Muroidea</taxon>
        <taxon>Muridae</taxon>
        <taxon>Murinae</taxon>
        <taxon>Mus</taxon>
        <taxon>Mus</taxon>
    </lineage>
</organism>
<sequence length="3726" mass="406570">MEGCDSPVVSGKDNGCGIPQHRQWTELNSAHLPDKPSSMEQPTGESHGPLDSLRAPFNERLADSSTSAGPPAEPASKEVSCNECSASFSSLQTYMEHHCPGTHPPPALREESASDTSEEGEEESDVENLAGEIVYQPDGSAYIVESLSQLAQSGAACGSSSGSGAVPSLFLNSLPGVGGKQGDPSCAAPVYPQIINTSHIASSFGKWFEGSDPAFPNTSALAGLSPVLHSFRVFDVRHKSNKDYLNSDGSAKSSCVSKDVPNNVDLSKFDGFVLYGKRKPILMCFLCKLSFGYVRSFVTHAVHDHRMTLSEEERKLLSNKNISAIIQGIGKDKEPLVSFLEPKNKNFQHPLVSTGNLIGPGHSFYGKFSGIRMEGEEALPAVAAAGPEQPQAGLLTPSTLLNLGGLTSSVLKTPITSVPLGPLASSPTKSSEGKDSGAAEGDKQESGGHQDCFSEKVEPAEEEEAEEEEEEEEEAEEEEEEEEEEEEEEEEASKGLFPNDLEEELEDSPSEESGPPAGGTTKKDLALSNPSISNSPLMPNVLQTLSRGPASTTSNSASNFVVFDGANRRSRLSFNSEGVRANVAEGRRLDFADESANKDSATAPEPNESTEGDDGGFVPHHQHAGSLCELGVGESPSGSGVECPKCDTVLGSSRSLGGHMTMMHSRNSCKTLKCPKCNWHYKYQQTLEAHMKEKHPEPGGSCVYCKSGQPHPRLARGESYTCGYKPFRCEVCNYSTTTKGNLSIHMQSDKHLNNMQNLQNGGGEQVFSHSAGAAAAAAAAAAAAANIGSSWGAPSPTKPKTKPTWRCEVCDYETNVARNLRIHMTSEKHMHNMMLLQQNMTQIQHNRHLGLGSLPSPAEAELYQYYLAQNMNLPNLKMDSTASDAQFMMSGFQLDPTGPMAAMTPALVGGEIPLDMRLGGGQLVSEELMNLGESFIQTNDPSLKLFQCAVCNKFTTDNLDMLGLHMNVERSLSEDEWKAVMGDSYQCKLCRYNTQLKANFQLHCKTDKHVQKYQLVAHIKEGGKANEWRLKCVAIGNPVHLKCNACDYYTNSLEKLRLHTVNSRHEASLKLYKHLQQHESGVEGESCYYHCVLCNYSTKAKLNLIQHVRSMKHQRSESLRKLQRLQKGLPEEDEDLGQIFTIRRCPSTDPEEPVEDAEGPSEASADPEELAKDQGSGSEEGQSKRAASSSQAEKELTDSPATTKRTSFPGSSETPLSSKRPKASEEIKPEQMYQCPYCKYSNADVNRLRVHAMTQHSVQPLLRCPLCQDMLNNKIHLQLHLTHLHSVAPDCVEKLIMTVTAPEMVMPSSMFLPAAAADRDGNSTLEEVGKQPEASEDPGKNILPPASMEHGGDLKPTSADPSCGREDSGFLCWKKGCNQVFKTSATLQTHFNEVHAKRPQLPVSDRHVYKYRCNQCSLAFKTIEKLQLHSQYHVIRAATMCCLCQRSFRTFQALKKHLETSHLELSEADIQQLYGGLLANGDLLAMGDPTLAEDHTIIVEEDKEEESDLEDKQSPTGSDSGSVQEDSGSEPKRALPFRKGPNFTMEKFLDPSRPYKCTVCKESFTQKNILLVHYNSVSHLHKLKRALQESATGQPEPTSSPDNKPFKCNTCNVAYSQSSTLEIHMRSVLHQTKARAAKLEAASGNSNGTGNSGGVSLSSSTPSPVGSSGANNTFTATNPSSAAMAPSVNALSQVPPESVVMPPLGNPISANIASPSEPKEANRKKLADMIASRQQQQQQQQQQQQQAQTLAQAQAQVQAHLQQELQQQAALIQSQLFNPTLLPHFPMTTETLLQLQQQQHLLFPFYIPSAEFQLNPEVSLPVTSGALTLTGSGPGLLEDLKVQVQIPQQSHQQILQQQQQQSQLSLSQSHSALLQPSQHPEKKNKVVIKEKDKESQREREGPEGAEGNTGPQESLPDASKAKEKKDLAPGGGSEGTMLPPRIASDARGNATKALLENFGFELVIQYNENKQKAQKKNGKAEQGGESLEKLECDSCGKLFSNILILKSHQEHVHQNYFPFKQLERFAKQYREHYDKLYPLRPQTPEPPPPPPPPPPPPLPTAPPQPASAPAIPASAPPITSPTIAPAQPSVPLTQLSMPMELPIFSPLMMQTMPLQTLPAQLPPQLGPVEPLPADLAQLYQHQLNPTLLQQQNKRPRTRITDDQLRVLRQYFDINNSPSEEQIKEMADKSGLPQKVIKHWFRNTLFKERQRNKDSPYNFSNPPITSLEELKIDSRPPSPEPQKQEYWGSKRSSRTRFTDYQLRVLQDFFDANAYPKDDEFEQLSNLLNLPTRVIVVWFQNARQKARKNYENQGEGKDGERRELTNDRYIRTSNLNYQCKKCSLVFQRIFDLIKHQKKLCYKDEDEEGQDDSQNEDSMDAMEILTPTSSSCSTPMPSQAYSTPAPSAAAANTAPSAFLQLTAETDELATFNSKAEASDEKPKQADPPSAQPNQTQEKQGQPKPEMQQQLEQLEQKTNAPQPKLPQPAAPSLPQPPPQAPPPQCPLPQSSPSPSQLSHLPLKPLHTSTPQQLANLPPQLIPYQCDQCKLAFPSFEHWQEHQQLHFLSAQNQFIHPQFLDRSLDMPFMLFDPSNPLLASQLLSGAIPQIPASSATSPSTPTSTMNTLKRKLEEKASASPGENDSGTGGEEPQRDKRLRTTITPEQLEILYQKYLLDSNPTRKMLDHIAHEVGLKKRVVQVWFQNTRARERKGQFRAVGPAQAHRRCPFCRALFKAKTALEAHIRSRHWHEAKRAGYNLTLSAMLLDCDGGLQMKGDIFDGTSFSHLPPSSSDGQGVPLSPVSKTMELSPRTLLSPSSIKVEGIEDFESPSMSSVNLNFDQTKLDNDDCSSVNTAITDTTTGDEGNADNDSATGIATETKSSAPNEGLTKAAMMAMSEYEDRLSSGLVSPAPSFYSKEYDNEGTVDYSETSSLADPCSPSPGASGSAGKSGDGGDRPGQKRFRTQMTNLQLKVLKSCFNDYRTPTMLECEVLGNDIGLPKRVVQVWFQNARAKEKKSKLSMAKHFGINQTSYEGPKTECTLCGIKYSARLSVRDHIFSQQHISKVKDTIGSQLDKEKEYFDPATVRQLMAQQELDRIKKANEVLGLAAQQQGMFDNAPLQALNLPTTYPALQGIPPVLLPGLNRPSLPGFTPANTALTSPKPNLMGLPSTTVPSPGLPTSGLPNKPSSASLSSPTPAQATMAMAPQPPPQPQQPQPPVQQPPPPPAAQQIPAPQLTPQQQRKDKDGEKGKEKEKAHKGKGEPLPVPKKEKGEAPPAGTGTISAPLPAMEYAVDPAQLQALQAALTSDPTALLTSQFLPYFVPGFSPYYAPQIPGALQSGYLQPMYGMEGLFPYSPALSRPLMGLSPGSLLQQYQQYQQSLQEAIQQQQQQQQQQQQQQQQQQRQLQQQQQQQQQKVQQQQQQQQQPKASQTPVPQGAASPDKDPAKESPKPEEQKNVPRELSPLLPKPPEEPEAESKSASADSLCDPFIVPKVQYKLVCRKCQAGFGDEEAARSHLKSLCCFGQSVVNLQEMVLHVPTGSGGGGGGGGGSGGGGGSYHCLACESALCGEEALSQHLESALHKHRTITRAARNAKEHPSLLPHSACFPDPSTASTSQSAAHSNDSPPPPSAAPSSSASPHASRKSWPPVGSRASAAKPPSFPPLSSSSTVTSSSCSTSGVQPSMPTDDYSEESDTDLSQKSDGPASPVEGPKDPSCPKDSGLTSVGTDTFRL</sequence>